<reference key="1">
    <citation type="journal article" date="2009" name="Nature">
        <title>Evolution of pathogenicity and sexual reproduction in eight Candida genomes.</title>
        <authorList>
            <person name="Butler G."/>
            <person name="Rasmussen M.D."/>
            <person name="Lin M.F."/>
            <person name="Santos M.A.S."/>
            <person name="Sakthikumar S."/>
            <person name="Munro C.A."/>
            <person name="Rheinbay E."/>
            <person name="Grabherr M."/>
            <person name="Forche A."/>
            <person name="Reedy J.L."/>
            <person name="Agrafioti I."/>
            <person name="Arnaud M.B."/>
            <person name="Bates S."/>
            <person name="Brown A.J.P."/>
            <person name="Brunke S."/>
            <person name="Costanzo M.C."/>
            <person name="Fitzpatrick D.A."/>
            <person name="de Groot P.W.J."/>
            <person name="Harris D."/>
            <person name="Hoyer L.L."/>
            <person name="Hube B."/>
            <person name="Klis F.M."/>
            <person name="Kodira C."/>
            <person name="Lennard N."/>
            <person name="Logue M.E."/>
            <person name="Martin R."/>
            <person name="Neiman A.M."/>
            <person name="Nikolaou E."/>
            <person name="Quail M.A."/>
            <person name="Quinn J."/>
            <person name="Santos M.C."/>
            <person name="Schmitzberger F.F."/>
            <person name="Sherlock G."/>
            <person name="Shah P."/>
            <person name="Silverstein K.A.T."/>
            <person name="Skrzypek M.S."/>
            <person name="Soll D."/>
            <person name="Staggs R."/>
            <person name="Stansfield I."/>
            <person name="Stumpf M.P.H."/>
            <person name="Sudbery P.E."/>
            <person name="Srikantha T."/>
            <person name="Zeng Q."/>
            <person name="Berman J."/>
            <person name="Berriman M."/>
            <person name="Heitman J."/>
            <person name="Gow N.A.R."/>
            <person name="Lorenz M.C."/>
            <person name="Birren B.W."/>
            <person name="Kellis M."/>
            <person name="Cuomo C.A."/>
        </authorList>
    </citation>
    <scope>NUCLEOTIDE SEQUENCE [LARGE SCALE GENOMIC DNA]</scope>
    <source>
        <strain>ATCC 6260 / CBS 566 / DSM 6381 / JCM 1539 / NBRC 10279 / NRRL Y-324</strain>
    </source>
</reference>
<evidence type="ECO:0000255" key="1">
    <source>
        <dbReference type="HAMAP-Rule" id="MF_03112"/>
    </source>
</evidence>
<feature type="chain" id="PRO_0000388223" description="ATPase GET3">
    <location>
        <begin position="1"/>
        <end position="347"/>
    </location>
</feature>
<feature type="active site" evidence="1">
    <location>
        <position position="57"/>
    </location>
</feature>
<feature type="binding site" evidence="1">
    <location>
        <begin position="26"/>
        <end position="33"/>
    </location>
    <ligand>
        <name>ATP</name>
        <dbReference type="ChEBI" id="CHEBI:30616"/>
    </ligand>
</feature>
<feature type="binding site" evidence="1">
    <location>
        <position position="241"/>
    </location>
    <ligand>
        <name>ATP</name>
        <dbReference type="ChEBI" id="CHEBI:30616"/>
    </ligand>
</feature>
<feature type="binding site" evidence="1">
    <location>
        <position position="268"/>
    </location>
    <ligand>
        <name>ATP</name>
        <dbReference type="ChEBI" id="CHEBI:30616"/>
    </ligand>
</feature>
<feature type="binding site" evidence="1">
    <location>
        <position position="279"/>
    </location>
    <ligand>
        <name>Zn(2+)</name>
        <dbReference type="ChEBI" id="CHEBI:29105"/>
        <note>ligand shared between dimeric partners</note>
    </ligand>
</feature>
<feature type="binding site" evidence="1">
    <location>
        <position position="282"/>
    </location>
    <ligand>
        <name>Zn(2+)</name>
        <dbReference type="ChEBI" id="CHEBI:29105"/>
        <note>ligand shared between dimeric partners</note>
    </ligand>
</feature>
<name>GET3_PICGU</name>
<proteinExistence type="inferred from homology"/>
<gene>
    <name evidence="1" type="primary">GET3</name>
    <name type="ORF">PGUG_02422</name>
</gene>
<accession>A5DGM1</accession>
<keyword id="KW-0067">ATP-binding</keyword>
<keyword id="KW-0963">Cytoplasm</keyword>
<keyword id="KW-0256">Endoplasmic reticulum</keyword>
<keyword id="KW-0333">Golgi apparatus</keyword>
<keyword id="KW-0378">Hydrolase</keyword>
<keyword id="KW-0479">Metal-binding</keyword>
<keyword id="KW-0547">Nucleotide-binding</keyword>
<keyword id="KW-1185">Reference proteome</keyword>
<keyword id="KW-0813">Transport</keyword>
<keyword id="KW-0862">Zinc</keyword>
<protein>
    <recommendedName>
        <fullName evidence="1">ATPase GET3</fullName>
        <ecNumber evidence="1">3.6.-.-</ecNumber>
    </recommendedName>
    <alternativeName>
        <fullName evidence="1">Arsenical pump-driving ATPase</fullName>
    </alternativeName>
    <alternativeName>
        <fullName evidence="1">Arsenite-stimulated ATPase</fullName>
    </alternativeName>
    <alternativeName>
        <fullName evidence="1">Golgi to ER traffic protein 3</fullName>
    </alternativeName>
    <alternativeName>
        <fullName evidence="1">Guided entry of tail-anchored proteins 3</fullName>
    </alternativeName>
</protein>
<dbReference type="EC" id="3.6.-.-" evidence="1"/>
<dbReference type="EMBL" id="CH408157">
    <property type="protein sequence ID" value="EDK38324.2"/>
    <property type="molecule type" value="Genomic_DNA"/>
</dbReference>
<dbReference type="RefSeq" id="XP_001484693.1">
    <property type="nucleotide sequence ID" value="XM_001484643.1"/>
</dbReference>
<dbReference type="SMR" id="A5DGM1"/>
<dbReference type="FunCoup" id="A5DGM1">
    <property type="interactions" value="970"/>
</dbReference>
<dbReference type="STRING" id="294746.A5DGM1"/>
<dbReference type="GeneID" id="5126725"/>
<dbReference type="KEGG" id="pgu:PGUG_02422"/>
<dbReference type="VEuPathDB" id="FungiDB:PGUG_02422"/>
<dbReference type="eggNOG" id="KOG2825">
    <property type="taxonomic scope" value="Eukaryota"/>
</dbReference>
<dbReference type="HOGENOM" id="CLU_040761_0_0_1"/>
<dbReference type="InParanoid" id="A5DGM1"/>
<dbReference type="OMA" id="MDAPYEF"/>
<dbReference type="OrthoDB" id="1770at2759"/>
<dbReference type="Proteomes" id="UP000001997">
    <property type="component" value="Unassembled WGS sequence"/>
</dbReference>
<dbReference type="GO" id="GO:0043529">
    <property type="term" value="C:GET complex"/>
    <property type="evidence" value="ECO:0007669"/>
    <property type="project" value="TreeGrafter"/>
</dbReference>
<dbReference type="GO" id="GO:0005794">
    <property type="term" value="C:Golgi apparatus"/>
    <property type="evidence" value="ECO:0007669"/>
    <property type="project" value="UniProtKB-SubCell"/>
</dbReference>
<dbReference type="GO" id="GO:0005524">
    <property type="term" value="F:ATP binding"/>
    <property type="evidence" value="ECO:0007669"/>
    <property type="project" value="UniProtKB-UniRule"/>
</dbReference>
<dbReference type="GO" id="GO:0016887">
    <property type="term" value="F:ATP hydrolysis activity"/>
    <property type="evidence" value="ECO:0007669"/>
    <property type="project" value="InterPro"/>
</dbReference>
<dbReference type="GO" id="GO:0046872">
    <property type="term" value="F:metal ion binding"/>
    <property type="evidence" value="ECO:0007669"/>
    <property type="project" value="UniProtKB-KW"/>
</dbReference>
<dbReference type="GO" id="GO:0071816">
    <property type="term" value="P:tail-anchored membrane protein insertion into ER membrane"/>
    <property type="evidence" value="ECO:0007669"/>
    <property type="project" value="TreeGrafter"/>
</dbReference>
<dbReference type="CDD" id="cd02035">
    <property type="entry name" value="ArsA"/>
    <property type="match status" value="1"/>
</dbReference>
<dbReference type="FunFam" id="3.40.50.300:FF:001359">
    <property type="entry name" value="ATPase GET3"/>
    <property type="match status" value="1"/>
</dbReference>
<dbReference type="Gene3D" id="3.40.50.300">
    <property type="entry name" value="P-loop containing nucleotide triphosphate hydrolases"/>
    <property type="match status" value="1"/>
</dbReference>
<dbReference type="HAMAP" id="MF_03112">
    <property type="entry name" value="Asna1_Get3"/>
    <property type="match status" value="1"/>
</dbReference>
<dbReference type="InterPro" id="IPR025723">
    <property type="entry name" value="Anion-transp_ATPase-like_dom"/>
</dbReference>
<dbReference type="InterPro" id="IPR016300">
    <property type="entry name" value="ATPase_ArsA/GET3"/>
</dbReference>
<dbReference type="InterPro" id="IPR027542">
    <property type="entry name" value="ATPase_ArsA/GET3_euk"/>
</dbReference>
<dbReference type="InterPro" id="IPR027417">
    <property type="entry name" value="P-loop_NTPase"/>
</dbReference>
<dbReference type="NCBIfam" id="TIGR00345">
    <property type="entry name" value="GET3_arsA_TRC40"/>
    <property type="match status" value="1"/>
</dbReference>
<dbReference type="PANTHER" id="PTHR10803">
    <property type="entry name" value="ARSENICAL PUMP-DRIVING ATPASE ARSENITE-TRANSLOCATING ATPASE"/>
    <property type="match status" value="1"/>
</dbReference>
<dbReference type="PANTHER" id="PTHR10803:SF3">
    <property type="entry name" value="ATPASE GET3"/>
    <property type="match status" value="1"/>
</dbReference>
<dbReference type="Pfam" id="PF02374">
    <property type="entry name" value="ArsA_ATPase"/>
    <property type="match status" value="1"/>
</dbReference>
<dbReference type="SUPFAM" id="SSF52540">
    <property type="entry name" value="P-loop containing nucleoside triphosphate hydrolases"/>
    <property type="match status" value="1"/>
</dbReference>
<sequence length="347" mass="38904">MDFELEPTLESIVEHDSLKWIFVGGKGGVGKTTTSSSIAVQLALSKPNDQFLLISTDPAHNLSDAFCQKFGKDARPVEGLPNLSCMEIDPEAAMSDLQQQASQYNNDPSDPMKNIMNDMTGSIPGIDEALSFMEVLKHIKNQKASDGDSDEKTVAYKTIIFDTAPTGHTLRFLQLPATLEKLLGKFKQLSGKLGPMLNMLGGGQQQDIFEKMNEIQKNVSEVNEQFTNPDLTTFVCVCISEFLSLYETERMIQELVSYNMDVNSIVVNQLLFADNDGSCKRCASRWKMQQKYLDQMAELYEDYHVVKMPLLGTEVRGIDNLKKFSKFLLSPYDPEKDGSLVFDMEEK</sequence>
<organism>
    <name type="scientific">Meyerozyma guilliermondii (strain ATCC 6260 / CBS 566 / DSM 6381 / JCM 1539 / NBRC 10279 / NRRL Y-324)</name>
    <name type="common">Yeast</name>
    <name type="synonym">Candida guilliermondii</name>
    <dbReference type="NCBI Taxonomy" id="294746"/>
    <lineage>
        <taxon>Eukaryota</taxon>
        <taxon>Fungi</taxon>
        <taxon>Dikarya</taxon>
        <taxon>Ascomycota</taxon>
        <taxon>Saccharomycotina</taxon>
        <taxon>Pichiomycetes</taxon>
        <taxon>Debaryomycetaceae</taxon>
        <taxon>Meyerozyma</taxon>
    </lineage>
</organism>
<comment type="function">
    <text evidence="1">ATPase required for the post-translational delivery of tail-anchored (TA) proteins to the endoplasmic reticulum. Recognizes and selectively binds the transmembrane domain of TA proteins in the cytosol. This complex then targets to the endoplasmic reticulum by membrane-bound receptors GET1 and GET2, where the tail-anchored protein is released for insertion. This process is regulated by ATP binding and hydrolysis. ATP binding drives the homodimer towards the closed dimer state, facilitating recognition of newly synthesized TA membrane proteins. ATP hydrolysis is required for insertion. Subsequently, the homodimer reverts towards the open dimer state, lowering its affinity for the GET1-GET2 receptor, and returning it to the cytosol to initiate a new round of targeting. Cooperates with the HDEL receptor ERD2 to mediate the ATP-dependent retrieval of resident ER proteins that contain a C-terminal H-D-E-L retention signal from the Golgi to the ER. Involved in low-level resistance to the oxyanions arsenite and arsenate, and in heat tolerance.</text>
</comment>
<comment type="subunit">
    <text evidence="1">Homodimer. Component of the Golgi to ER traffic (GET) complex, which is composed of GET1, GET2 and GET3. Within the complex, GET1 and GET2 form a heterotetramer which is stabilized by phosphatidylinositol binding and which binds to the GET3 homodimer. Interacts with the chloride channel protein GEF1.</text>
</comment>
<comment type="subcellular location">
    <subcellularLocation>
        <location evidence="1">Cytoplasm</location>
    </subcellularLocation>
    <subcellularLocation>
        <location evidence="1">Endoplasmic reticulum</location>
    </subcellularLocation>
    <subcellularLocation>
        <location evidence="1">Golgi apparatus</location>
    </subcellularLocation>
    <text evidence="1">GET1 and GET2 are required for targeting GET3 to the endoplasmic reticulum.</text>
</comment>
<comment type="similarity">
    <text evidence="1">Belongs to the arsA ATPase family.</text>
</comment>